<proteinExistence type="evidence at protein level"/>
<gene>
    <name evidence="1" type="primary">chlB</name>
</gene>
<comment type="function">
    <text evidence="1 2">Component of the dark-operative protochlorophyllide reductase (DPOR) that uses Mg-ATP and reduced ferredoxin to reduce ring D of protochlorophyllide (Pchlide) to form chlorophyllide a (Chlide). This reaction is light-independent. The NB-protein (ChlN-ChlB) is the catalytic component of the complex.</text>
</comment>
<comment type="catalytic activity">
    <reaction evidence="1">
        <text>chlorophyllide a + oxidized 2[4Fe-4S]-[ferredoxin] + 2 ADP + 2 phosphate = protochlorophyllide a + reduced 2[4Fe-4S]-[ferredoxin] + 2 ATP + 2 H2O</text>
        <dbReference type="Rhea" id="RHEA:28202"/>
        <dbReference type="Rhea" id="RHEA-COMP:10002"/>
        <dbReference type="Rhea" id="RHEA-COMP:10004"/>
        <dbReference type="ChEBI" id="CHEBI:15377"/>
        <dbReference type="ChEBI" id="CHEBI:30616"/>
        <dbReference type="ChEBI" id="CHEBI:33722"/>
        <dbReference type="ChEBI" id="CHEBI:33723"/>
        <dbReference type="ChEBI" id="CHEBI:43474"/>
        <dbReference type="ChEBI" id="CHEBI:83348"/>
        <dbReference type="ChEBI" id="CHEBI:83350"/>
        <dbReference type="ChEBI" id="CHEBI:456216"/>
        <dbReference type="EC" id="1.3.7.7"/>
    </reaction>
</comment>
<comment type="cofactor">
    <cofactor evidence="1">
        <name>[4Fe-4S] cluster</name>
        <dbReference type="ChEBI" id="CHEBI:49883"/>
    </cofactor>
    <text evidence="1">Binds 1 [4Fe-4S] cluster per heterodimer. The cluster is bound at the heterodimer interface by residues from both subunits.</text>
</comment>
<comment type="pathway">
    <text evidence="1">Porphyrin-containing compound metabolism; chlorophyll biosynthesis (light-independent).</text>
</comment>
<comment type="subunit">
    <text evidence="3">Protochlorophyllide reductase is composed of three subunits; ChlL, ChlN and ChlB. Forms a heterotetramer of two ChlB and two ChlN subunits (Probable).</text>
</comment>
<comment type="disruption phenotype">
    <text evidence="2">Cells lacking this gere are unable to synthesize chlorophyll, accumulating protochlorophyllide in darkness while synthesizing chlorophyll normally in the light.</text>
</comment>
<comment type="similarity">
    <text evidence="1">Belongs to the ChlB/BchB/BchZ family.</text>
</comment>
<organism>
    <name type="scientific">Leptolyngbya boryana</name>
    <name type="common">Plectonema boryanum</name>
    <dbReference type="NCBI Taxonomy" id="1184"/>
    <lineage>
        <taxon>Bacteria</taxon>
        <taxon>Bacillati</taxon>
        <taxon>Cyanobacteriota</taxon>
        <taxon>Cyanophyceae</taxon>
        <taxon>Leptolyngbyales</taxon>
        <taxon>Leptolyngbyaceae</taxon>
        <taxon>Leptolyngbya group</taxon>
        <taxon>Leptolyngbya</taxon>
    </lineage>
</organism>
<name>CHLB_LEPBY</name>
<keyword id="KW-0004">4Fe-4S</keyword>
<keyword id="KW-0067">ATP-binding</keyword>
<keyword id="KW-0149">Chlorophyll biosynthesis</keyword>
<keyword id="KW-0408">Iron</keyword>
<keyword id="KW-0411">Iron-sulfur</keyword>
<keyword id="KW-0479">Metal-binding</keyword>
<keyword id="KW-0547">Nucleotide-binding</keyword>
<keyword id="KW-0560">Oxidoreductase</keyword>
<keyword id="KW-0602">Photosynthesis</keyword>
<evidence type="ECO:0000255" key="1">
    <source>
        <dbReference type="HAMAP-Rule" id="MF_00353"/>
    </source>
</evidence>
<evidence type="ECO:0000269" key="2">
    <source>
    </source>
</evidence>
<evidence type="ECO:0000305" key="3">
    <source>
    </source>
</evidence>
<sequence length="508" mass="56820">MKLAYWMYAGPAHIGTLRIASSFKNVHAIMHAPLGDDYFNVMRSMLERERDYTPVTTSVVDRHVLARGSQEKVVDNITRKDAEEHPDLIVLTPTCTSSILQEDLQNFVERAQLEAKGDVMLADVNHYRVNELQAADRTLQQIVQFYIAKARKQGNLVTEKTEKPSVNIFGMTTLGFHNNHDATELKKLMSDLGIEVNAIVPAGASVHELKSLPRAWFNLVPYRETGLLAAEFLQQEFNMPYVDITPIGIVETARCIRKIQQVINAQGANVDYEPFIDQQTRFVSQAAWFSRSIDCQNLTGKKAVVFGDNTHAAALTKILAREMGIHVLLAGTYCKYDEAWFREQVSEYCDDVLVSDDNGQIADAIARLEPAAIFGTQMERHVGKRLDIPCGVIAAPIHIQNFPVGYKPFVGYEGSNQIVDLIYNSFTLGMEDHLLEIFGGHDTKEVITKSVSADSDLNWSKDGLAELNRIPGFVRGKVKRNTEKFARDRNITQITAEVLYAAKEAVGA</sequence>
<protein>
    <recommendedName>
        <fullName evidence="1">Light-independent protochlorophyllide reductase subunit B</fullName>
        <shortName evidence="1">DPOR subunit B</shortName>
        <shortName evidence="1">LI-POR subunit B</shortName>
        <ecNumber evidence="1">1.3.7.7</ecNumber>
    </recommendedName>
</protein>
<feature type="chain" id="PRO_0000219804" description="Light-independent protochlorophyllide reductase subunit B">
    <location>
        <begin position="1"/>
        <end position="508"/>
    </location>
</feature>
<feature type="active site" description="Proton donor" evidence="1">
    <location>
        <position position="294"/>
    </location>
</feature>
<feature type="binding site" evidence="1">
    <location>
        <position position="36"/>
    </location>
    <ligand>
        <name>[4Fe-4S] cluster</name>
        <dbReference type="ChEBI" id="CHEBI:49883"/>
        <note>ligand shared with heterodimeric partner</note>
    </ligand>
</feature>
<feature type="binding site" evidence="1">
    <location>
        <begin position="429"/>
        <end position="430"/>
    </location>
    <ligand>
        <name>substrate</name>
    </ligand>
</feature>
<reference key="1">
    <citation type="journal article" date="1996" name="Plant Cell Physiol.">
        <title>Identification of the chlB gene and the gene product essential for the light-independent chlorophyll biosynthesis in the cyanobacterium Plectonema boryanum.</title>
        <authorList>
            <person name="Fujita Y."/>
            <person name="Takagi H."/>
            <person name="Hase T."/>
        </authorList>
    </citation>
    <scope>NUCLEOTIDE SEQUENCE [GENOMIC DNA]</scope>
    <scope>FUNCTION</scope>
    <scope>DISRUPTION PHENOTYPE</scope>
    <scope>SUBUNIT</scope>
    <source>
        <strain>ATCC 27894 / CCAP 1463/1 / IAM M-101 / PCC 6306 / UTEX 581</strain>
    </source>
</reference>
<dbReference type="EC" id="1.3.7.7" evidence="1"/>
<dbReference type="EMBL" id="D78208">
    <property type="protein sequence ID" value="BAA11312.1"/>
    <property type="molecule type" value="Genomic_DNA"/>
</dbReference>
<dbReference type="SMR" id="P95463"/>
<dbReference type="BioCyc" id="MetaCyc:MONOMER-19729"/>
<dbReference type="UniPathway" id="UPA00670"/>
<dbReference type="GO" id="GO:0051539">
    <property type="term" value="F:4 iron, 4 sulfur cluster binding"/>
    <property type="evidence" value="ECO:0007669"/>
    <property type="project" value="UniProtKB-UniRule"/>
</dbReference>
<dbReference type="GO" id="GO:0005524">
    <property type="term" value="F:ATP binding"/>
    <property type="evidence" value="ECO:0007669"/>
    <property type="project" value="UniProtKB-UniRule"/>
</dbReference>
<dbReference type="GO" id="GO:0046872">
    <property type="term" value="F:metal ion binding"/>
    <property type="evidence" value="ECO:0007669"/>
    <property type="project" value="UniProtKB-KW"/>
</dbReference>
<dbReference type="GO" id="GO:0016730">
    <property type="term" value="F:oxidoreductase activity, acting on iron-sulfur proteins as donors"/>
    <property type="evidence" value="ECO:0007669"/>
    <property type="project" value="InterPro"/>
</dbReference>
<dbReference type="GO" id="GO:0016636">
    <property type="term" value="F:oxidoreductase activity, acting on the CH-CH group of donors, iron-sulfur protein as acceptor"/>
    <property type="evidence" value="ECO:0007669"/>
    <property type="project" value="UniProtKB-UniRule"/>
</dbReference>
<dbReference type="GO" id="GO:0036068">
    <property type="term" value="P:light-independent chlorophyll biosynthetic process"/>
    <property type="evidence" value="ECO:0007669"/>
    <property type="project" value="UniProtKB-UniRule"/>
</dbReference>
<dbReference type="GO" id="GO:0019685">
    <property type="term" value="P:photosynthesis, dark reaction"/>
    <property type="evidence" value="ECO:0007669"/>
    <property type="project" value="InterPro"/>
</dbReference>
<dbReference type="CDD" id="cd01981">
    <property type="entry name" value="Pchlide_reductase_B"/>
    <property type="match status" value="1"/>
</dbReference>
<dbReference type="Gene3D" id="1.20.89.20">
    <property type="match status" value="1"/>
</dbReference>
<dbReference type="Gene3D" id="3.40.50.1980">
    <property type="entry name" value="Nitrogenase molybdenum iron protein domain"/>
    <property type="match status" value="3"/>
</dbReference>
<dbReference type="Gene3D" id="1.10.8.550">
    <property type="entry name" value="Proto-chlorophyllide reductase 57 kD subunit B"/>
    <property type="match status" value="1"/>
</dbReference>
<dbReference type="HAMAP" id="MF_00353">
    <property type="entry name" value="ChlB_BchB"/>
    <property type="match status" value="1"/>
</dbReference>
<dbReference type="InterPro" id="IPR050152">
    <property type="entry name" value="ChlB/BchB/BchZ"/>
</dbReference>
<dbReference type="InterPro" id="IPR013580">
    <property type="entry name" value="LI-POR_suB-like_C"/>
</dbReference>
<dbReference type="InterPro" id="IPR000510">
    <property type="entry name" value="Nase/OxRdtase_comp1"/>
</dbReference>
<dbReference type="InterPro" id="IPR042298">
    <property type="entry name" value="P-CP_red_C"/>
</dbReference>
<dbReference type="InterPro" id="IPR005969">
    <property type="entry name" value="Protochl_reductB"/>
</dbReference>
<dbReference type="InterPro" id="IPR016209">
    <property type="entry name" value="Protochlorophyllide_Rdtase"/>
</dbReference>
<dbReference type="NCBIfam" id="TIGR01278">
    <property type="entry name" value="DPOR_BchB"/>
    <property type="match status" value="1"/>
</dbReference>
<dbReference type="PANTHER" id="PTHR33712">
    <property type="entry name" value="LIGHT-INDEPENDENT PROTOCHLOROPHYLLIDE REDUCTASE SUBUNIT B"/>
    <property type="match status" value="1"/>
</dbReference>
<dbReference type="PANTHER" id="PTHR33712:SF7">
    <property type="entry name" value="LIGHT-INDEPENDENT PROTOCHLOROPHYLLIDE REDUCTASE SUBUNIT B"/>
    <property type="match status" value="1"/>
</dbReference>
<dbReference type="Pfam" id="PF00148">
    <property type="entry name" value="Oxidored_nitro"/>
    <property type="match status" value="1"/>
</dbReference>
<dbReference type="Pfam" id="PF08369">
    <property type="entry name" value="PCP_red"/>
    <property type="match status" value="1"/>
</dbReference>
<dbReference type="PIRSF" id="PIRSF000163">
    <property type="entry name" value="PCP_ChlB"/>
    <property type="match status" value="1"/>
</dbReference>
<dbReference type="SUPFAM" id="SSF53807">
    <property type="entry name" value="Helical backbone' metal receptor"/>
    <property type="match status" value="1"/>
</dbReference>
<accession>P95463</accession>